<gene>
    <name evidence="1" type="primary">ndk</name>
    <name type="ordered locus">ECIAI1_2570</name>
</gene>
<protein>
    <recommendedName>
        <fullName evidence="1">Nucleoside diphosphate kinase</fullName>
        <shortName evidence="1">NDK</shortName>
        <shortName evidence="1">NDP kinase</shortName>
        <ecNumber evidence="1">2.7.4.6</ecNumber>
    </recommendedName>
    <alternativeName>
        <fullName evidence="1">Nucleoside-2-P kinase</fullName>
    </alternativeName>
</protein>
<keyword id="KW-0067">ATP-binding</keyword>
<keyword id="KW-0963">Cytoplasm</keyword>
<keyword id="KW-0418">Kinase</keyword>
<keyword id="KW-0460">Magnesium</keyword>
<keyword id="KW-0479">Metal-binding</keyword>
<keyword id="KW-0546">Nucleotide metabolism</keyword>
<keyword id="KW-0547">Nucleotide-binding</keyword>
<keyword id="KW-0597">Phosphoprotein</keyword>
<keyword id="KW-0808">Transferase</keyword>
<dbReference type="EC" id="2.7.4.6" evidence="1"/>
<dbReference type="EMBL" id="CU928160">
    <property type="protein sequence ID" value="CAQ99410.1"/>
    <property type="molecule type" value="Genomic_DNA"/>
</dbReference>
<dbReference type="RefSeq" id="WP_000963837.1">
    <property type="nucleotide sequence ID" value="NC_011741.1"/>
</dbReference>
<dbReference type="SMR" id="B7M7M2"/>
<dbReference type="GeneID" id="93774618"/>
<dbReference type="KEGG" id="ecr:ECIAI1_2570"/>
<dbReference type="HOGENOM" id="CLU_060216_8_1_6"/>
<dbReference type="GO" id="GO:0005737">
    <property type="term" value="C:cytoplasm"/>
    <property type="evidence" value="ECO:0007669"/>
    <property type="project" value="UniProtKB-SubCell"/>
</dbReference>
<dbReference type="GO" id="GO:0005524">
    <property type="term" value="F:ATP binding"/>
    <property type="evidence" value="ECO:0007669"/>
    <property type="project" value="UniProtKB-UniRule"/>
</dbReference>
<dbReference type="GO" id="GO:0046872">
    <property type="term" value="F:metal ion binding"/>
    <property type="evidence" value="ECO:0007669"/>
    <property type="project" value="UniProtKB-KW"/>
</dbReference>
<dbReference type="GO" id="GO:0004550">
    <property type="term" value="F:nucleoside diphosphate kinase activity"/>
    <property type="evidence" value="ECO:0007669"/>
    <property type="project" value="UniProtKB-UniRule"/>
</dbReference>
<dbReference type="GO" id="GO:0006241">
    <property type="term" value="P:CTP biosynthetic process"/>
    <property type="evidence" value="ECO:0007669"/>
    <property type="project" value="UniProtKB-UniRule"/>
</dbReference>
<dbReference type="GO" id="GO:0006183">
    <property type="term" value="P:GTP biosynthetic process"/>
    <property type="evidence" value="ECO:0007669"/>
    <property type="project" value="UniProtKB-UniRule"/>
</dbReference>
<dbReference type="GO" id="GO:0006228">
    <property type="term" value="P:UTP biosynthetic process"/>
    <property type="evidence" value="ECO:0007669"/>
    <property type="project" value="UniProtKB-UniRule"/>
</dbReference>
<dbReference type="CDD" id="cd04413">
    <property type="entry name" value="NDPk_I"/>
    <property type="match status" value="1"/>
</dbReference>
<dbReference type="FunFam" id="3.30.70.141:FF:000001">
    <property type="entry name" value="Nucleoside diphosphate kinase"/>
    <property type="match status" value="1"/>
</dbReference>
<dbReference type="Gene3D" id="3.30.70.141">
    <property type="entry name" value="Nucleoside diphosphate kinase-like domain"/>
    <property type="match status" value="1"/>
</dbReference>
<dbReference type="HAMAP" id="MF_00451">
    <property type="entry name" value="NDP_kinase"/>
    <property type="match status" value="1"/>
</dbReference>
<dbReference type="InterPro" id="IPR034907">
    <property type="entry name" value="NDK-like_dom"/>
</dbReference>
<dbReference type="InterPro" id="IPR036850">
    <property type="entry name" value="NDK-like_dom_sf"/>
</dbReference>
<dbReference type="InterPro" id="IPR001564">
    <property type="entry name" value="Nucleoside_diP_kinase"/>
</dbReference>
<dbReference type="InterPro" id="IPR023005">
    <property type="entry name" value="Nucleoside_diP_kinase_AS"/>
</dbReference>
<dbReference type="NCBIfam" id="NF001908">
    <property type="entry name" value="PRK00668.1"/>
    <property type="match status" value="1"/>
</dbReference>
<dbReference type="PANTHER" id="PTHR46161">
    <property type="entry name" value="NUCLEOSIDE DIPHOSPHATE KINASE"/>
    <property type="match status" value="1"/>
</dbReference>
<dbReference type="PANTHER" id="PTHR46161:SF3">
    <property type="entry name" value="NUCLEOSIDE DIPHOSPHATE KINASE DDB_G0292928-RELATED"/>
    <property type="match status" value="1"/>
</dbReference>
<dbReference type="Pfam" id="PF00334">
    <property type="entry name" value="NDK"/>
    <property type="match status" value="1"/>
</dbReference>
<dbReference type="PRINTS" id="PR01243">
    <property type="entry name" value="NUCDPKINASE"/>
</dbReference>
<dbReference type="SMART" id="SM00562">
    <property type="entry name" value="NDK"/>
    <property type="match status" value="1"/>
</dbReference>
<dbReference type="SUPFAM" id="SSF54919">
    <property type="entry name" value="Nucleoside diphosphate kinase, NDK"/>
    <property type="match status" value="1"/>
</dbReference>
<dbReference type="PROSITE" id="PS00469">
    <property type="entry name" value="NDPK"/>
    <property type="match status" value="1"/>
</dbReference>
<dbReference type="PROSITE" id="PS51374">
    <property type="entry name" value="NDPK_LIKE"/>
    <property type="match status" value="1"/>
</dbReference>
<organism>
    <name type="scientific">Escherichia coli O8 (strain IAI1)</name>
    <dbReference type="NCBI Taxonomy" id="585034"/>
    <lineage>
        <taxon>Bacteria</taxon>
        <taxon>Pseudomonadati</taxon>
        <taxon>Pseudomonadota</taxon>
        <taxon>Gammaproteobacteria</taxon>
        <taxon>Enterobacterales</taxon>
        <taxon>Enterobacteriaceae</taxon>
        <taxon>Escherichia</taxon>
    </lineage>
</organism>
<reference key="1">
    <citation type="journal article" date="2009" name="PLoS Genet.">
        <title>Organised genome dynamics in the Escherichia coli species results in highly diverse adaptive paths.</title>
        <authorList>
            <person name="Touchon M."/>
            <person name="Hoede C."/>
            <person name="Tenaillon O."/>
            <person name="Barbe V."/>
            <person name="Baeriswyl S."/>
            <person name="Bidet P."/>
            <person name="Bingen E."/>
            <person name="Bonacorsi S."/>
            <person name="Bouchier C."/>
            <person name="Bouvet O."/>
            <person name="Calteau A."/>
            <person name="Chiapello H."/>
            <person name="Clermont O."/>
            <person name="Cruveiller S."/>
            <person name="Danchin A."/>
            <person name="Diard M."/>
            <person name="Dossat C."/>
            <person name="Karoui M.E."/>
            <person name="Frapy E."/>
            <person name="Garry L."/>
            <person name="Ghigo J.M."/>
            <person name="Gilles A.M."/>
            <person name="Johnson J."/>
            <person name="Le Bouguenec C."/>
            <person name="Lescat M."/>
            <person name="Mangenot S."/>
            <person name="Martinez-Jehanne V."/>
            <person name="Matic I."/>
            <person name="Nassif X."/>
            <person name="Oztas S."/>
            <person name="Petit M.A."/>
            <person name="Pichon C."/>
            <person name="Rouy Z."/>
            <person name="Ruf C.S."/>
            <person name="Schneider D."/>
            <person name="Tourret J."/>
            <person name="Vacherie B."/>
            <person name="Vallenet D."/>
            <person name="Medigue C."/>
            <person name="Rocha E.P.C."/>
            <person name="Denamur E."/>
        </authorList>
    </citation>
    <scope>NUCLEOTIDE SEQUENCE [LARGE SCALE GENOMIC DNA]</scope>
    <source>
        <strain>IAI1</strain>
    </source>
</reference>
<accession>B7M7M2</accession>
<sequence>MAIERTFSIIKPNAVAKNVIGNIFARFEAAGFKIVGTKMLHLTVEQARGFYAEHDGKPFFDGLVEFMTSGPIVVSVLEGENAVQRHRDLLGATNPANALAGTLRADYADSLTENGTHGSDSVESAAREIAYFFGEGEVCPRTR</sequence>
<proteinExistence type="inferred from homology"/>
<evidence type="ECO:0000255" key="1">
    <source>
        <dbReference type="HAMAP-Rule" id="MF_00451"/>
    </source>
</evidence>
<feature type="chain" id="PRO_1000124959" description="Nucleoside diphosphate kinase">
    <location>
        <begin position="1"/>
        <end position="143"/>
    </location>
</feature>
<feature type="active site" description="Pros-phosphohistidine intermediate" evidence="1">
    <location>
        <position position="117"/>
    </location>
</feature>
<feature type="binding site" evidence="1">
    <location>
        <position position="11"/>
    </location>
    <ligand>
        <name>ATP</name>
        <dbReference type="ChEBI" id="CHEBI:30616"/>
    </ligand>
</feature>
<feature type="binding site" evidence="1">
    <location>
        <position position="59"/>
    </location>
    <ligand>
        <name>ATP</name>
        <dbReference type="ChEBI" id="CHEBI:30616"/>
    </ligand>
</feature>
<feature type="binding site" evidence="1">
    <location>
        <position position="87"/>
    </location>
    <ligand>
        <name>ATP</name>
        <dbReference type="ChEBI" id="CHEBI:30616"/>
    </ligand>
</feature>
<feature type="binding site" evidence="1">
    <location>
        <position position="93"/>
    </location>
    <ligand>
        <name>ATP</name>
        <dbReference type="ChEBI" id="CHEBI:30616"/>
    </ligand>
</feature>
<feature type="binding site" evidence="1">
    <location>
        <position position="104"/>
    </location>
    <ligand>
        <name>ATP</name>
        <dbReference type="ChEBI" id="CHEBI:30616"/>
    </ligand>
</feature>
<feature type="binding site" evidence="1">
    <location>
        <position position="114"/>
    </location>
    <ligand>
        <name>ATP</name>
        <dbReference type="ChEBI" id="CHEBI:30616"/>
    </ligand>
</feature>
<comment type="function">
    <text evidence="1">Major role in the synthesis of nucleoside triphosphates other than ATP. The ATP gamma phosphate is transferred to the NDP beta phosphate via a ping-pong mechanism, using a phosphorylated active-site intermediate.</text>
</comment>
<comment type="catalytic activity">
    <reaction evidence="1">
        <text>a 2'-deoxyribonucleoside 5'-diphosphate + ATP = a 2'-deoxyribonucleoside 5'-triphosphate + ADP</text>
        <dbReference type="Rhea" id="RHEA:44640"/>
        <dbReference type="ChEBI" id="CHEBI:30616"/>
        <dbReference type="ChEBI" id="CHEBI:61560"/>
        <dbReference type="ChEBI" id="CHEBI:73316"/>
        <dbReference type="ChEBI" id="CHEBI:456216"/>
        <dbReference type="EC" id="2.7.4.6"/>
    </reaction>
</comment>
<comment type="catalytic activity">
    <reaction evidence="1">
        <text>a ribonucleoside 5'-diphosphate + ATP = a ribonucleoside 5'-triphosphate + ADP</text>
        <dbReference type="Rhea" id="RHEA:18113"/>
        <dbReference type="ChEBI" id="CHEBI:30616"/>
        <dbReference type="ChEBI" id="CHEBI:57930"/>
        <dbReference type="ChEBI" id="CHEBI:61557"/>
        <dbReference type="ChEBI" id="CHEBI:456216"/>
        <dbReference type="EC" id="2.7.4.6"/>
    </reaction>
</comment>
<comment type="cofactor">
    <cofactor evidence="1">
        <name>Mg(2+)</name>
        <dbReference type="ChEBI" id="CHEBI:18420"/>
    </cofactor>
</comment>
<comment type="subunit">
    <text evidence="1">Homotetramer.</text>
</comment>
<comment type="subcellular location">
    <subcellularLocation>
        <location evidence="1">Cytoplasm</location>
    </subcellularLocation>
</comment>
<comment type="similarity">
    <text evidence="1">Belongs to the NDK family.</text>
</comment>
<name>NDK_ECO8A</name>